<reference key="1">
    <citation type="journal article" date="2005" name="Arch. Microbiol.">
        <title>The genome sequence of an anaerobic aromatic-degrading denitrifying bacterium, strain EbN1.</title>
        <authorList>
            <person name="Rabus R."/>
            <person name="Kube M."/>
            <person name="Heider J."/>
            <person name="Beck A."/>
            <person name="Heitmann K."/>
            <person name="Widdel F."/>
            <person name="Reinhardt R."/>
        </authorList>
    </citation>
    <scope>NUCLEOTIDE SEQUENCE [LARGE SCALE GENOMIC DNA]</scope>
    <source>
        <strain>DSM 19018 / LMG 30748 / EbN1</strain>
    </source>
</reference>
<comment type="function">
    <text evidence="1">Catalyzes two activities which are involved in the cyclic version of arginine biosynthesis: the synthesis of N-acetylglutamate from glutamate and acetyl-CoA as the acetyl donor, and of ornithine by transacetylation between N(2)-acetylornithine and glutamate.</text>
</comment>
<comment type="catalytic activity">
    <reaction evidence="1">
        <text>N(2)-acetyl-L-ornithine + L-glutamate = N-acetyl-L-glutamate + L-ornithine</text>
        <dbReference type="Rhea" id="RHEA:15349"/>
        <dbReference type="ChEBI" id="CHEBI:29985"/>
        <dbReference type="ChEBI" id="CHEBI:44337"/>
        <dbReference type="ChEBI" id="CHEBI:46911"/>
        <dbReference type="ChEBI" id="CHEBI:57805"/>
        <dbReference type="EC" id="2.3.1.35"/>
    </reaction>
</comment>
<comment type="catalytic activity">
    <reaction evidence="1">
        <text>L-glutamate + acetyl-CoA = N-acetyl-L-glutamate + CoA + H(+)</text>
        <dbReference type="Rhea" id="RHEA:24292"/>
        <dbReference type="ChEBI" id="CHEBI:15378"/>
        <dbReference type="ChEBI" id="CHEBI:29985"/>
        <dbReference type="ChEBI" id="CHEBI:44337"/>
        <dbReference type="ChEBI" id="CHEBI:57287"/>
        <dbReference type="ChEBI" id="CHEBI:57288"/>
        <dbReference type="EC" id="2.3.1.1"/>
    </reaction>
</comment>
<comment type="pathway">
    <text evidence="1">Amino-acid biosynthesis; L-arginine biosynthesis; L-ornithine and N-acetyl-L-glutamate from L-glutamate and N(2)-acetyl-L-ornithine (cyclic): step 1/1.</text>
</comment>
<comment type="pathway">
    <text evidence="1">Amino-acid biosynthesis; L-arginine biosynthesis; N(2)-acetyl-L-ornithine from L-glutamate: step 1/4.</text>
</comment>
<comment type="subunit">
    <text evidence="1">Heterotetramer of two alpha and two beta chains.</text>
</comment>
<comment type="subcellular location">
    <subcellularLocation>
        <location evidence="1">Cytoplasm</location>
    </subcellularLocation>
</comment>
<comment type="similarity">
    <text evidence="1">Belongs to the ArgJ family.</text>
</comment>
<proteinExistence type="inferred from homology"/>
<name>ARGJ_AROAE</name>
<evidence type="ECO:0000255" key="1">
    <source>
        <dbReference type="HAMAP-Rule" id="MF_01106"/>
    </source>
</evidence>
<accession>Q5P706</accession>
<protein>
    <recommendedName>
        <fullName evidence="1">Arginine biosynthesis bifunctional protein ArgJ</fullName>
    </recommendedName>
    <domain>
        <recommendedName>
            <fullName evidence="1">Glutamate N-acetyltransferase</fullName>
            <ecNumber evidence="1">2.3.1.35</ecNumber>
        </recommendedName>
        <alternativeName>
            <fullName evidence="1">Ornithine acetyltransferase</fullName>
            <shortName evidence="1">OATase</shortName>
        </alternativeName>
        <alternativeName>
            <fullName evidence="1">Ornithine transacetylase</fullName>
        </alternativeName>
    </domain>
    <domain>
        <recommendedName>
            <fullName evidence="1">Amino-acid acetyltransferase</fullName>
            <ecNumber evidence="1">2.3.1.1</ecNumber>
        </recommendedName>
        <alternativeName>
            <fullName evidence="1">N-acetylglutamate synthase</fullName>
            <shortName evidence="1">AGSase</shortName>
        </alternativeName>
    </domain>
    <component>
        <recommendedName>
            <fullName evidence="1">Arginine biosynthesis bifunctional protein ArgJ alpha chain</fullName>
        </recommendedName>
    </component>
    <component>
        <recommendedName>
            <fullName evidence="1">Arginine biosynthesis bifunctional protein ArgJ beta chain</fullName>
        </recommendedName>
    </component>
</protein>
<sequence>MPVNLIAVQPSDLLPVPGVRVGVAEAGIRKANRRDLTLIELAAGSRVAGVFTLNRFCAAPVQLCKQHIAGGDVRALVINTGVANAGTGEQGLADAHATCVAVGRTLGVAPEQVLPFSTGVILEALPVDRLIAGLPAAHADLREDGWFDAAHAIMTTDTLAKAVSRQVEIGGRTVTLTGISKGAGMIKPNMATMLGFLACDAAVSQALLDALTKEAADLSFNSITVDGDTSTNDSFIVVATGQAGNAEIADPLGSDFHALRDAVIDVSIRLAQAIVRDGEGATKFMTIAVEGGLDVVECRKVAYAIGQSPLVKTAFFASDPNLGRILAAIGYAGIQDLDVGGLRVWLGTAAEEVLVAELGGRAPTYREEDGVRVMKEAEITVRVDLGRGRARATVWTCDFSYDYVKINADYRS</sequence>
<keyword id="KW-0012">Acyltransferase</keyword>
<keyword id="KW-0028">Amino-acid biosynthesis</keyword>
<keyword id="KW-0055">Arginine biosynthesis</keyword>
<keyword id="KW-0068">Autocatalytic cleavage</keyword>
<keyword id="KW-0963">Cytoplasm</keyword>
<keyword id="KW-0511">Multifunctional enzyme</keyword>
<keyword id="KW-1185">Reference proteome</keyword>
<keyword id="KW-0808">Transferase</keyword>
<dbReference type="EC" id="2.3.1.35" evidence="1"/>
<dbReference type="EC" id="2.3.1.1" evidence="1"/>
<dbReference type="EMBL" id="CR555306">
    <property type="protein sequence ID" value="CAI06905.1"/>
    <property type="molecule type" value="Genomic_DNA"/>
</dbReference>
<dbReference type="RefSeq" id="WP_011236633.1">
    <property type="nucleotide sequence ID" value="NC_006513.1"/>
</dbReference>
<dbReference type="SMR" id="Q5P706"/>
<dbReference type="STRING" id="76114.ebA1431"/>
<dbReference type="MEROPS" id="T05.001"/>
<dbReference type="KEGG" id="eba:ebA1431"/>
<dbReference type="eggNOG" id="COG1364">
    <property type="taxonomic scope" value="Bacteria"/>
</dbReference>
<dbReference type="HOGENOM" id="CLU_027172_1_0_4"/>
<dbReference type="OrthoDB" id="9804242at2"/>
<dbReference type="UniPathway" id="UPA00068">
    <property type="reaction ID" value="UER00106"/>
</dbReference>
<dbReference type="UniPathway" id="UPA00068">
    <property type="reaction ID" value="UER00111"/>
</dbReference>
<dbReference type="Proteomes" id="UP000006552">
    <property type="component" value="Chromosome"/>
</dbReference>
<dbReference type="GO" id="GO:0005737">
    <property type="term" value="C:cytoplasm"/>
    <property type="evidence" value="ECO:0007669"/>
    <property type="project" value="UniProtKB-SubCell"/>
</dbReference>
<dbReference type="GO" id="GO:0004358">
    <property type="term" value="F:glutamate N-acetyltransferase activity"/>
    <property type="evidence" value="ECO:0007669"/>
    <property type="project" value="UniProtKB-UniRule"/>
</dbReference>
<dbReference type="GO" id="GO:0004042">
    <property type="term" value="F:L-glutamate N-acetyltransferase activity"/>
    <property type="evidence" value="ECO:0007669"/>
    <property type="project" value="UniProtKB-UniRule"/>
</dbReference>
<dbReference type="GO" id="GO:0006526">
    <property type="term" value="P:L-arginine biosynthetic process"/>
    <property type="evidence" value="ECO:0007669"/>
    <property type="project" value="UniProtKB-UniRule"/>
</dbReference>
<dbReference type="GO" id="GO:0006592">
    <property type="term" value="P:ornithine biosynthetic process"/>
    <property type="evidence" value="ECO:0007669"/>
    <property type="project" value="TreeGrafter"/>
</dbReference>
<dbReference type="CDD" id="cd02152">
    <property type="entry name" value="OAT"/>
    <property type="match status" value="1"/>
</dbReference>
<dbReference type="FunFam" id="3.60.70.12:FF:000001">
    <property type="entry name" value="Arginine biosynthesis bifunctional protein ArgJ, chloroplastic"/>
    <property type="match status" value="1"/>
</dbReference>
<dbReference type="Gene3D" id="3.10.20.340">
    <property type="entry name" value="ArgJ beta chain, C-terminal domain"/>
    <property type="match status" value="1"/>
</dbReference>
<dbReference type="Gene3D" id="3.60.70.12">
    <property type="entry name" value="L-amino peptidase D-ALA esterase/amidase"/>
    <property type="match status" value="1"/>
</dbReference>
<dbReference type="HAMAP" id="MF_01106">
    <property type="entry name" value="ArgJ"/>
    <property type="match status" value="1"/>
</dbReference>
<dbReference type="InterPro" id="IPR002813">
    <property type="entry name" value="Arg_biosynth_ArgJ"/>
</dbReference>
<dbReference type="InterPro" id="IPR016117">
    <property type="entry name" value="ArgJ-like_dom_sf"/>
</dbReference>
<dbReference type="InterPro" id="IPR042195">
    <property type="entry name" value="ArgJ_beta_C"/>
</dbReference>
<dbReference type="NCBIfam" id="TIGR00120">
    <property type="entry name" value="ArgJ"/>
    <property type="match status" value="1"/>
</dbReference>
<dbReference type="NCBIfam" id="NF003802">
    <property type="entry name" value="PRK05388.1"/>
    <property type="match status" value="1"/>
</dbReference>
<dbReference type="PANTHER" id="PTHR23100">
    <property type="entry name" value="ARGININE BIOSYNTHESIS BIFUNCTIONAL PROTEIN ARGJ"/>
    <property type="match status" value="1"/>
</dbReference>
<dbReference type="PANTHER" id="PTHR23100:SF0">
    <property type="entry name" value="ARGININE BIOSYNTHESIS BIFUNCTIONAL PROTEIN ARGJ, MITOCHONDRIAL"/>
    <property type="match status" value="1"/>
</dbReference>
<dbReference type="Pfam" id="PF01960">
    <property type="entry name" value="ArgJ"/>
    <property type="match status" value="1"/>
</dbReference>
<dbReference type="SUPFAM" id="SSF56266">
    <property type="entry name" value="DmpA/ArgJ-like"/>
    <property type="match status" value="1"/>
</dbReference>
<feature type="chain" id="PRO_0000227204" description="Arginine biosynthesis bifunctional protein ArgJ alpha chain" evidence="1">
    <location>
        <begin position="1"/>
        <end position="191"/>
    </location>
</feature>
<feature type="chain" id="PRO_0000227205" description="Arginine biosynthesis bifunctional protein ArgJ beta chain" evidence="1">
    <location>
        <begin position="192"/>
        <end position="412"/>
    </location>
</feature>
<feature type="active site" description="Nucleophile" evidence="1">
    <location>
        <position position="192"/>
    </location>
</feature>
<feature type="binding site" evidence="1">
    <location>
        <position position="155"/>
    </location>
    <ligand>
        <name>substrate</name>
    </ligand>
</feature>
<feature type="binding site" evidence="1">
    <location>
        <position position="181"/>
    </location>
    <ligand>
        <name>substrate</name>
    </ligand>
</feature>
<feature type="binding site" evidence="1">
    <location>
        <position position="192"/>
    </location>
    <ligand>
        <name>substrate</name>
    </ligand>
</feature>
<feature type="binding site" evidence="1">
    <location>
        <position position="279"/>
    </location>
    <ligand>
        <name>substrate</name>
    </ligand>
</feature>
<feature type="binding site" evidence="1">
    <location>
        <position position="407"/>
    </location>
    <ligand>
        <name>substrate</name>
    </ligand>
</feature>
<feature type="binding site" evidence="1">
    <location>
        <position position="412"/>
    </location>
    <ligand>
        <name>substrate</name>
    </ligand>
</feature>
<feature type="site" description="Involved in the stabilization of negative charge on the oxyanion by the formation of the oxyanion hole" evidence="1">
    <location>
        <position position="118"/>
    </location>
</feature>
<feature type="site" description="Involved in the stabilization of negative charge on the oxyanion by the formation of the oxyanion hole" evidence="1">
    <location>
        <position position="119"/>
    </location>
</feature>
<feature type="site" description="Cleavage; by autolysis" evidence="1">
    <location>
        <begin position="191"/>
        <end position="192"/>
    </location>
</feature>
<organism>
    <name type="scientific">Aromatoleum aromaticum (strain DSM 19018 / LMG 30748 / EbN1)</name>
    <name type="common">Azoarcus sp. (strain EbN1)</name>
    <dbReference type="NCBI Taxonomy" id="76114"/>
    <lineage>
        <taxon>Bacteria</taxon>
        <taxon>Pseudomonadati</taxon>
        <taxon>Pseudomonadota</taxon>
        <taxon>Betaproteobacteria</taxon>
        <taxon>Rhodocyclales</taxon>
        <taxon>Rhodocyclaceae</taxon>
        <taxon>Aromatoleum</taxon>
    </lineage>
</organism>
<gene>
    <name evidence="1" type="primary">argJ</name>
    <name type="ordered locus">AZOSEA07820</name>
    <name type="ORF">ebA1431</name>
</gene>